<protein>
    <recommendedName>
        <fullName evidence="1">ATP synthase epsilon chain</fullName>
    </recommendedName>
    <alternativeName>
        <fullName evidence="1">ATP synthase F1 sector epsilon subunit</fullName>
    </alternativeName>
    <alternativeName>
        <fullName evidence="1">F-ATPase epsilon subunit</fullName>
    </alternativeName>
</protein>
<name>ATPE_CALBD</name>
<keyword id="KW-0066">ATP synthesis</keyword>
<keyword id="KW-1003">Cell membrane</keyword>
<keyword id="KW-0139">CF(1)</keyword>
<keyword id="KW-0375">Hydrogen ion transport</keyword>
<keyword id="KW-0406">Ion transport</keyword>
<keyword id="KW-0472">Membrane</keyword>
<keyword id="KW-0813">Transport</keyword>
<evidence type="ECO:0000255" key="1">
    <source>
        <dbReference type="HAMAP-Rule" id="MF_00530"/>
    </source>
</evidence>
<sequence length="137" mass="15849">MAEFELEVLQPERVFFKDNVEMIVLRTIDGEIGIMANHQPIVVPIGIGKLRIKKDGKWREAAIAGGLLEVKNNKATILSDAVEWPEEIDRQRALLAKERAEKRLEQKLPPDEYERYRAALYRALNRLKLAEENKEEI</sequence>
<feature type="chain" id="PRO_1000146307" description="ATP synthase epsilon chain">
    <location>
        <begin position="1"/>
        <end position="137"/>
    </location>
</feature>
<reference key="1">
    <citation type="submission" date="2009-01" db="EMBL/GenBank/DDBJ databases">
        <title>Complete sequence of chromosome of Caldicellulosiruptor becscii DSM 6725.</title>
        <authorList>
            <person name="Lucas S."/>
            <person name="Copeland A."/>
            <person name="Lapidus A."/>
            <person name="Glavina del Rio T."/>
            <person name="Tice H."/>
            <person name="Bruce D."/>
            <person name="Goodwin L."/>
            <person name="Pitluck S."/>
            <person name="Sims D."/>
            <person name="Meincke L."/>
            <person name="Brettin T."/>
            <person name="Detter J.C."/>
            <person name="Han C."/>
            <person name="Larimer F."/>
            <person name="Land M."/>
            <person name="Hauser L."/>
            <person name="Kyrpides N."/>
            <person name="Ovchinnikova G."/>
            <person name="Kataeva I."/>
            <person name="Adams M.W.W."/>
        </authorList>
    </citation>
    <scope>NUCLEOTIDE SEQUENCE [LARGE SCALE GENOMIC DNA]</scope>
    <source>
        <strain>ATCC BAA-1888 / DSM 6725 / KCTC 15123 / Z-1320</strain>
    </source>
</reference>
<dbReference type="EMBL" id="CP001393">
    <property type="protein sequence ID" value="ACM60521.1"/>
    <property type="molecule type" value="Genomic_DNA"/>
</dbReference>
<dbReference type="RefSeq" id="WP_015907886.1">
    <property type="nucleotide sequence ID" value="NC_012034.1"/>
</dbReference>
<dbReference type="SMR" id="B9MS67"/>
<dbReference type="STRING" id="521460.Athe_1423"/>
<dbReference type="GeneID" id="31772768"/>
<dbReference type="KEGG" id="ate:Athe_1423"/>
<dbReference type="eggNOG" id="COG0355">
    <property type="taxonomic scope" value="Bacteria"/>
</dbReference>
<dbReference type="HOGENOM" id="CLU_084338_1_3_9"/>
<dbReference type="Proteomes" id="UP000007723">
    <property type="component" value="Chromosome"/>
</dbReference>
<dbReference type="GO" id="GO:0005886">
    <property type="term" value="C:plasma membrane"/>
    <property type="evidence" value="ECO:0007669"/>
    <property type="project" value="UniProtKB-SubCell"/>
</dbReference>
<dbReference type="GO" id="GO:0045259">
    <property type="term" value="C:proton-transporting ATP synthase complex"/>
    <property type="evidence" value="ECO:0007669"/>
    <property type="project" value="UniProtKB-KW"/>
</dbReference>
<dbReference type="GO" id="GO:0005524">
    <property type="term" value="F:ATP binding"/>
    <property type="evidence" value="ECO:0007669"/>
    <property type="project" value="UniProtKB-UniRule"/>
</dbReference>
<dbReference type="GO" id="GO:0046933">
    <property type="term" value="F:proton-transporting ATP synthase activity, rotational mechanism"/>
    <property type="evidence" value="ECO:0007669"/>
    <property type="project" value="UniProtKB-UniRule"/>
</dbReference>
<dbReference type="CDD" id="cd12152">
    <property type="entry name" value="F1-ATPase_delta"/>
    <property type="match status" value="1"/>
</dbReference>
<dbReference type="Gene3D" id="1.20.5.440">
    <property type="entry name" value="ATP synthase delta/epsilon subunit, C-terminal domain"/>
    <property type="match status" value="1"/>
</dbReference>
<dbReference type="Gene3D" id="2.60.15.10">
    <property type="entry name" value="F0F1 ATP synthase delta/epsilon subunit, N-terminal"/>
    <property type="match status" value="1"/>
</dbReference>
<dbReference type="HAMAP" id="MF_00530">
    <property type="entry name" value="ATP_synth_epsil_bac"/>
    <property type="match status" value="1"/>
</dbReference>
<dbReference type="InterPro" id="IPR036794">
    <property type="entry name" value="ATP_F1_dsu/esu_C_sf"/>
</dbReference>
<dbReference type="InterPro" id="IPR001469">
    <property type="entry name" value="ATP_synth_F1_dsu/esu"/>
</dbReference>
<dbReference type="InterPro" id="IPR020546">
    <property type="entry name" value="ATP_synth_F1_dsu/esu_N"/>
</dbReference>
<dbReference type="InterPro" id="IPR020547">
    <property type="entry name" value="ATP_synth_F1_esu_C"/>
</dbReference>
<dbReference type="InterPro" id="IPR036771">
    <property type="entry name" value="ATPsynth_dsu/esu_N"/>
</dbReference>
<dbReference type="NCBIfam" id="TIGR01216">
    <property type="entry name" value="ATP_synt_epsi"/>
    <property type="match status" value="1"/>
</dbReference>
<dbReference type="PANTHER" id="PTHR13822">
    <property type="entry name" value="ATP SYNTHASE DELTA/EPSILON CHAIN"/>
    <property type="match status" value="1"/>
</dbReference>
<dbReference type="PANTHER" id="PTHR13822:SF10">
    <property type="entry name" value="ATP SYNTHASE EPSILON CHAIN, CHLOROPLASTIC"/>
    <property type="match status" value="1"/>
</dbReference>
<dbReference type="Pfam" id="PF00401">
    <property type="entry name" value="ATP-synt_DE"/>
    <property type="match status" value="1"/>
</dbReference>
<dbReference type="Pfam" id="PF02823">
    <property type="entry name" value="ATP-synt_DE_N"/>
    <property type="match status" value="1"/>
</dbReference>
<dbReference type="SUPFAM" id="SSF46604">
    <property type="entry name" value="Epsilon subunit of F1F0-ATP synthase C-terminal domain"/>
    <property type="match status" value="1"/>
</dbReference>
<dbReference type="SUPFAM" id="SSF51344">
    <property type="entry name" value="Epsilon subunit of F1F0-ATP synthase N-terminal domain"/>
    <property type="match status" value="1"/>
</dbReference>
<comment type="function">
    <text evidence="1">Produces ATP from ADP in the presence of a proton gradient across the membrane.</text>
</comment>
<comment type="subunit">
    <text evidence="1">F-type ATPases have 2 components, CF(1) - the catalytic core - and CF(0) - the membrane proton channel. CF(1) has five subunits: alpha(3), beta(3), gamma(1), delta(1), epsilon(1). CF(0) has three main subunits: a, b and c.</text>
</comment>
<comment type="subcellular location">
    <subcellularLocation>
        <location evidence="1">Cell membrane</location>
        <topology evidence="1">Peripheral membrane protein</topology>
    </subcellularLocation>
</comment>
<comment type="similarity">
    <text evidence="1">Belongs to the ATPase epsilon chain family.</text>
</comment>
<organism>
    <name type="scientific">Caldicellulosiruptor bescii (strain ATCC BAA-1888 / DSM 6725 / KCTC 15123 / Z-1320)</name>
    <name type="common">Anaerocellum thermophilum</name>
    <dbReference type="NCBI Taxonomy" id="521460"/>
    <lineage>
        <taxon>Bacteria</taxon>
        <taxon>Bacillati</taxon>
        <taxon>Bacillota</taxon>
        <taxon>Bacillota incertae sedis</taxon>
        <taxon>Caldicellulosiruptorales</taxon>
        <taxon>Caldicellulosiruptoraceae</taxon>
        <taxon>Caldicellulosiruptor</taxon>
    </lineage>
</organism>
<proteinExistence type="inferred from homology"/>
<gene>
    <name evidence="1" type="primary">atpC</name>
    <name type="ordered locus">Athe_1423</name>
</gene>
<accession>B9MS67</accession>